<keyword id="KW-0488">Methylation</keyword>
<keyword id="KW-0687">Ribonucleoprotein</keyword>
<keyword id="KW-0689">Ribosomal protein</keyword>
<keyword id="KW-0694">RNA-binding</keyword>
<keyword id="KW-0699">rRNA-binding</keyword>
<keyword id="KW-0820">tRNA-binding</keyword>
<accession>A9IJ10</accession>
<evidence type="ECO:0000250" key="1"/>
<evidence type="ECO:0000255" key="2">
    <source>
        <dbReference type="HAMAP-Rule" id="MF_00403"/>
    </source>
</evidence>
<evidence type="ECO:0000305" key="3"/>
<organism>
    <name type="scientific">Bordetella petrii (strain ATCC BAA-461 / DSM 12804 / CCUG 43448)</name>
    <dbReference type="NCBI Taxonomy" id="340100"/>
    <lineage>
        <taxon>Bacteria</taxon>
        <taxon>Pseudomonadati</taxon>
        <taxon>Pseudomonadota</taxon>
        <taxon>Betaproteobacteria</taxon>
        <taxon>Burkholderiales</taxon>
        <taxon>Alcaligenaceae</taxon>
        <taxon>Bordetella</taxon>
    </lineage>
</organism>
<comment type="function">
    <text evidence="2">With S4 and S5 plays an important role in translational accuracy.</text>
</comment>
<comment type="function">
    <text evidence="2">Interacts with and stabilizes bases of the 16S rRNA that are involved in tRNA selection in the A site and with the mRNA backbone. Located at the interface of the 30S and 50S subunits, it traverses the body of the 30S subunit contacting proteins on the other side and probably holding the rRNA structure together. The combined cluster of proteins S8, S12 and S17 appears to hold together the shoulder and platform of the 30S subunit.</text>
</comment>
<comment type="subunit">
    <text evidence="2">Part of the 30S ribosomal subunit. Contacts proteins S8 and S17. May interact with IF1 in the 30S initiation complex.</text>
</comment>
<comment type="similarity">
    <text evidence="2">Belongs to the universal ribosomal protein uS12 family.</text>
</comment>
<dbReference type="EMBL" id="AM902716">
    <property type="protein sequence ID" value="CAP45309.1"/>
    <property type="molecule type" value="Genomic_DNA"/>
</dbReference>
<dbReference type="SMR" id="A9IJ10"/>
<dbReference type="STRING" id="94624.Bpet4957"/>
<dbReference type="KEGG" id="bpt:Bpet4957"/>
<dbReference type="eggNOG" id="COG0048">
    <property type="taxonomic scope" value="Bacteria"/>
</dbReference>
<dbReference type="Proteomes" id="UP000001225">
    <property type="component" value="Chromosome"/>
</dbReference>
<dbReference type="GO" id="GO:0015935">
    <property type="term" value="C:small ribosomal subunit"/>
    <property type="evidence" value="ECO:0007669"/>
    <property type="project" value="InterPro"/>
</dbReference>
<dbReference type="GO" id="GO:0019843">
    <property type="term" value="F:rRNA binding"/>
    <property type="evidence" value="ECO:0007669"/>
    <property type="project" value="UniProtKB-UniRule"/>
</dbReference>
<dbReference type="GO" id="GO:0003735">
    <property type="term" value="F:structural constituent of ribosome"/>
    <property type="evidence" value="ECO:0007669"/>
    <property type="project" value="InterPro"/>
</dbReference>
<dbReference type="GO" id="GO:0000049">
    <property type="term" value="F:tRNA binding"/>
    <property type="evidence" value="ECO:0007669"/>
    <property type="project" value="UniProtKB-UniRule"/>
</dbReference>
<dbReference type="GO" id="GO:0006412">
    <property type="term" value="P:translation"/>
    <property type="evidence" value="ECO:0007669"/>
    <property type="project" value="UniProtKB-UniRule"/>
</dbReference>
<dbReference type="CDD" id="cd03368">
    <property type="entry name" value="Ribosomal_S12"/>
    <property type="match status" value="1"/>
</dbReference>
<dbReference type="FunFam" id="2.40.50.140:FF:000001">
    <property type="entry name" value="30S ribosomal protein S12"/>
    <property type="match status" value="1"/>
</dbReference>
<dbReference type="Gene3D" id="2.40.50.140">
    <property type="entry name" value="Nucleic acid-binding proteins"/>
    <property type="match status" value="1"/>
</dbReference>
<dbReference type="HAMAP" id="MF_00403_B">
    <property type="entry name" value="Ribosomal_uS12_B"/>
    <property type="match status" value="1"/>
</dbReference>
<dbReference type="InterPro" id="IPR012340">
    <property type="entry name" value="NA-bd_OB-fold"/>
</dbReference>
<dbReference type="InterPro" id="IPR006032">
    <property type="entry name" value="Ribosomal_uS12"/>
</dbReference>
<dbReference type="InterPro" id="IPR005679">
    <property type="entry name" value="Ribosomal_uS12_bac"/>
</dbReference>
<dbReference type="NCBIfam" id="TIGR00981">
    <property type="entry name" value="rpsL_bact"/>
    <property type="match status" value="1"/>
</dbReference>
<dbReference type="PANTHER" id="PTHR11652">
    <property type="entry name" value="30S RIBOSOMAL PROTEIN S12 FAMILY MEMBER"/>
    <property type="match status" value="1"/>
</dbReference>
<dbReference type="Pfam" id="PF00164">
    <property type="entry name" value="Ribosom_S12_S23"/>
    <property type="match status" value="1"/>
</dbReference>
<dbReference type="PIRSF" id="PIRSF002133">
    <property type="entry name" value="Ribosomal_S12/S23"/>
    <property type="match status" value="1"/>
</dbReference>
<dbReference type="PRINTS" id="PR01034">
    <property type="entry name" value="RIBOSOMALS12"/>
</dbReference>
<dbReference type="SUPFAM" id="SSF50249">
    <property type="entry name" value="Nucleic acid-binding proteins"/>
    <property type="match status" value="1"/>
</dbReference>
<dbReference type="PROSITE" id="PS00055">
    <property type="entry name" value="RIBOSOMAL_S12"/>
    <property type="match status" value="1"/>
</dbReference>
<sequence>MPTISQLVRKPREVSVIKSKSPALENCPQRRGVCTRVYTTTPKKPNSALRKVAKVRLTNGYEVISYIGGEGHNLQEHSVVLVRGGRVKDLPGVRYHIVRGSLDLQGVKDRKQARSKYGAKRPKKA</sequence>
<gene>
    <name evidence="2" type="primary">rpsL</name>
    <name type="ordered locus">Bpet4957</name>
</gene>
<feature type="chain" id="PRO_1000194129" description="Small ribosomal subunit protein uS12">
    <location>
        <begin position="1"/>
        <end position="125"/>
    </location>
</feature>
<feature type="modified residue" description="3-methylthioaspartic acid" evidence="1">
    <location>
        <position position="89"/>
    </location>
</feature>
<protein>
    <recommendedName>
        <fullName evidence="2">Small ribosomal subunit protein uS12</fullName>
    </recommendedName>
    <alternativeName>
        <fullName evidence="3">30S ribosomal protein S12</fullName>
    </alternativeName>
</protein>
<name>RS12_BORPD</name>
<proteinExistence type="inferred from homology"/>
<reference key="1">
    <citation type="journal article" date="2008" name="BMC Genomics">
        <title>The missing link: Bordetella petrii is endowed with both the metabolic versatility of environmental bacteria and virulence traits of pathogenic Bordetellae.</title>
        <authorList>
            <person name="Gross R."/>
            <person name="Guzman C.A."/>
            <person name="Sebaihia M."/>
            <person name="Martin dos Santos V.A.P."/>
            <person name="Pieper D.H."/>
            <person name="Koebnik R."/>
            <person name="Lechner M."/>
            <person name="Bartels D."/>
            <person name="Buhrmester J."/>
            <person name="Choudhuri J.V."/>
            <person name="Ebensen T."/>
            <person name="Gaigalat L."/>
            <person name="Herrmann S."/>
            <person name="Khachane A.N."/>
            <person name="Larisch C."/>
            <person name="Link S."/>
            <person name="Linke B."/>
            <person name="Meyer F."/>
            <person name="Mormann S."/>
            <person name="Nakunst D."/>
            <person name="Rueckert C."/>
            <person name="Schneiker-Bekel S."/>
            <person name="Schulze K."/>
            <person name="Voerholter F.-J."/>
            <person name="Yevsa T."/>
            <person name="Engle J.T."/>
            <person name="Goldman W.E."/>
            <person name="Puehler A."/>
            <person name="Goebel U.B."/>
            <person name="Goesmann A."/>
            <person name="Bloecker H."/>
            <person name="Kaiser O."/>
            <person name="Martinez-Arias R."/>
        </authorList>
    </citation>
    <scope>NUCLEOTIDE SEQUENCE [LARGE SCALE GENOMIC DNA]</scope>
    <source>
        <strain>ATCC BAA-461 / DSM 12804 / CCUG 43448</strain>
    </source>
</reference>